<proteinExistence type="predicted"/>
<organism>
    <name type="scientific">Diadromus pulchellus idnoreovirus 1</name>
    <name type="common">DpIRV-1</name>
    <dbReference type="NCBI Taxonomy" id="37368"/>
    <lineage>
        <taxon>Viruses</taxon>
        <taxon>Riboviria</taxon>
        <taxon>Orthornavirae</taxon>
        <taxon>Duplornaviricota</taxon>
        <taxon>Resentoviricetes</taxon>
        <taxon>Reovirales</taxon>
        <taxon>Spinareoviridae</taxon>
        <taxon>Idnoreovirus</taxon>
        <taxon>Idnoreovirus 1</taxon>
    </lineage>
</organism>
<evidence type="ECO:0000255" key="1"/>
<evidence type="ECO:0000256" key="2">
    <source>
        <dbReference type="SAM" id="MobiDB-lite"/>
    </source>
</evidence>
<evidence type="ECO:0000305" key="3"/>
<sequence>MTSTMKLFTDHAEISVRERPPQRNNNNQEQDNSNRPAPRRLFGLNEKYNFDQPETTFDKLLHQICLGNYEQVDDKIINDSITLAALRKYSCEYKDLKPEKAPKLKNECMKQFAQPGQVVEIIGIDLPLDSSIDQDDLYDLKDDNDVIPVLRVYQSAQDARTKTTENKKDYILDTRVIPDNFAASLFLKSVLRAILLQIFSSLQNQLVKTDVATNPEFMRMSNAFASTRRGPFYNIASLVPALSYPDSRSVPLIVGFILTQENLSLLSLYSMIVTTKVSSTIMALYENNSSEEECEDSISAASCTNQSNVNNSDNIRMTITLPCGLTIAFFVYYRYTLFQRRVKCSTSILLSS</sequence>
<keyword id="KW-1032">Host cell membrane</keyword>
<keyword id="KW-1043">Host membrane</keyword>
<keyword id="KW-0472">Membrane</keyword>
<keyword id="KW-0812">Transmembrane</keyword>
<keyword id="KW-1133">Transmembrane helix</keyword>
<accession>Q86283</accession>
<comment type="subcellular location">
    <subcellularLocation>
        <location evidence="3">Host cell membrane</location>
        <topology evidence="3">Single-pass membrane protein</topology>
    </subcellularLocation>
</comment>
<feature type="chain" id="PRO_0000404252" description="Uncharacterized protein S9">
    <location>
        <begin position="1"/>
        <end position="352"/>
    </location>
</feature>
<feature type="transmembrane region" description="Helical" evidence="1">
    <location>
        <begin position="317"/>
        <end position="333"/>
    </location>
</feature>
<feature type="region of interest" description="Disordered" evidence="2">
    <location>
        <begin position="1"/>
        <end position="40"/>
    </location>
</feature>
<feature type="compositionally biased region" description="Basic and acidic residues" evidence="2">
    <location>
        <begin position="8"/>
        <end position="21"/>
    </location>
</feature>
<feature type="compositionally biased region" description="Low complexity" evidence="2">
    <location>
        <begin position="22"/>
        <end position="36"/>
    </location>
</feature>
<organismHost>
    <name type="scientific">Diadromus pulchellus</name>
    <name type="common">Parasitic wasp</name>
    <dbReference type="NCBI Taxonomy" id="7420"/>
</organismHost>
<name>S9_DPIRV</name>
<gene>
    <name type="primary">S9</name>
</gene>
<dbReference type="EMBL" id="X82046">
    <property type="protein sequence ID" value="CAA57562.1"/>
    <property type="molecule type" value="Genomic_RNA"/>
</dbReference>
<dbReference type="GO" id="GO:0020002">
    <property type="term" value="C:host cell plasma membrane"/>
    <property type="evidence" value="ECO:0007669"/>
    <property type="project" value="UniProtKB-SubCell"/>
</dbReference>
<dbReference type="GO" id="GO:0016020">
    <property type="term" value="C:membrane"/>
    <property type="evidence" value="ECO:0007669"/>
    <property type="project" value="UniProtKB-KW"/>
</dbReference>
<protein>
    <recommendedName>
        <fullName>Uncharacterized protein S9</fullName>
    </recommendedName>
</protein>
<reference key="1">
    <citation type="journal article" date="1995" name="Virology">
        <title>The genome segments of DpRV, a commensal reovirus of the wasp Diadromus pulchellus (Hymenoptera).</title>
        <authorList>
            <person name="Bigot Y."/>
            <person name="Drezen J.M."/>
            <person name="Sizaret P.Y."/>
            <person name="Rabouille A."/>
            <person name="Hamelin M.H."/>
            <person name="Periquet G."/>
        </authorList>
    </citation>
    <scope>NUCLEOTIDE SEQUENCE [GENOMIC RNA]</scope>
</reference>